<feature type="chain" id="PRO_0000235618" description="5'-nucleotidase SurE">
    <location>
        <begin position="1"/>
        <end position="249"/>
    </location>
</feature>
<feature type="binding site" evidence="1">
    <location>
        <position position="8"/>
    </location>
    <ligand>
        <name>a divalent metal cation</name>
        <dbReference type="ChEBI" id="CHEBI:60240"/>
    </ligand>
</feature>
<feature type="binding site" evidence="1">
    <location>
        <position position="9"/>
    </location>
    <ligand>
        <name>a divalent metal cation</name>
        <dbReference type="ChEBI" id="CHEBI:60240"/>
    </ligand>
</feature>
<feature type="binding site" evidence="1">
    <location>
        <position position="39"/>
    </location>
    <ligand>
        <name>a divalent metal cation</name>
        <dbReference type="ChEBI" id="CHEBI:60240"/>
    </ligand>
</feature>
<feature type="binding site" evidence="1">
    <location>
        <position position="91"/>
    </location>
    <ligand>
        <name>a divalent metal cation</name>
        <dbReference type="ChEBI" id="CHEBI:60240"/>
    </ligand>
</feature>
<accession>Q4QML8</accession>
<sequence length="249" mass="27337">MRILVSNDDGFHAEGIQVLAMELRKIAEVIIVAPDRNRSAASSSLTLVEPLRPRHLDNGDYCVNGTPADCVHLALNGFLSGQVDLVVSGINAGCNMGDDTIYSGTLAAALEGRHLGLPAIAVSLDGRQHYETAARVVCDLIPKLHHQLLNPREIININVPDLLFEELKGYKVCRLGYRASSAEVIKQKDPRDETIYWIGPSALPEDESEGTDFYAVKNGYVSITPIQADLTAYHSLLSLQNWLEQEFTK</sequence>
<proteinExistence type="inferred from homology"/>
<protein>
    <recommendedName>
        <fullName evidence="1">5'-nucleotidase SurE</fullName>
        <ecNumber evidence="1">3.1.3.5</ecNumber>
    </recommendedName>
    <alternativeName>
        <fullName evidence="1">Nucleoside 5'-monophosphate phosphohydrolase</fullName>
    </alternativeName>
</protein>
<gene>
    <name evidence="1" type="primary">surE</name>
    <name type="ordered locus">NTHI0825</name>
</gene>
<reference key="1">
    <citation type="journal article" date="2005" name="J. Bacteriol.">
        <title>Genomic sequence of an otitis media isolate of nontypeable Haemophilus influenzae: comparative study with H. influenzae serotype d, strain KW20.</title>
        <authorList>
            <person name="Harrison A."/>
            <person name="Dyer D.W."/>
            <person name="Gillaspy A."/>
            <person name="Ray W.C."/>
            <person name="Mungur R."/>
            <person name="Carson M.B."/>
            <person name="Zhong H."/>
            <person name="Gipson J."/>
            <person name="Gipson M."/>
            <person name="Johnson L.S."/>
            <person name="Lewis L."/>
            <person name="Bakaletz L.O."/>
            <person name="Munson R.S. Jr."/>
        </authorList>
    </citation>
    <scope>NUCLEOTIDE SEQUENCE [LARGE SCALE GENOMIC DNA]</scope>
    <source>
        <strain>86-028NP</strain>
    </source>
</reference>
<dbReference type="EC" id="3.1.3.5" evidence="1"/>
<dbReference type="EMBL" id="CP000057">
    <property type="protein sequence ID" value="AAX87729.1"/>
    <property type="molecule type" value="Genomic_DNA"/>
</dbReference>
<dbReference type="RefSeq" id="WP_011272178.1">
    <property type="nucleotide sequence ID" value="NC_007146.2"/>
</dbReference>
<dbReference type="SMR" id="Q4QML8"/>
<dbReference type="KEGG" id="hit:NTHI0825"/>
<dbReference type="HOGENOM" id="CLU_045192_1_2_6"/>
<dbReference type="Proteomes" id="UP000002525">
    <property type="component" value="Chromosome"/>
</dbReference>
<dbReference type="GO" id="GO:0005737">
    <property type="term" value="C:cytoplasm"/>
    <property type="evidence" value="ECO:0007669"/>
    <property type="project" value="UniProtKB-SubCell"/>
</dbReference>
<dbReference type="GO" id="GO:0008254">
    <property type="term" value="F:3'-nucleotidase activity"/>
    <property type="evidence" value="ECO:0007669"/>
    <property type="project" value="TreeGrafter"/>
</dbReference>
<dbReference type="GO" id="GO:0008253">
    <property type="term" value="F:5'-nucleotidase activity"/>
    <property type="evidence" value="ECO:0007669"/>
    <property type="project" value="UniProtKB-UniRule"/>
</dbReference>
<dbReference type="GO" id="GO:0004309">
    <property type="term" value="F:exopolyphosphatase activity"/>
    <property type="evidence" value="ECO:0007669"/>
    <property type="project" value="TreeGrafter"/>
</dbReference>
<dbReference type="GO" id="GO:0046872">
    <property type="term" value="F:metal ion binding"/>
    <property type="evidence" value="ECO:0007669"/>
    <property type="project" value="UniProtKB-UniRule"/>
</dbReference>
<dbReference type="GO" id="GO:0000166">
    <property type="term" value="F:nucleotide binding"/>
    <property type="evidence" value="ECO:0007669"/>
    <property type="project" value="UniProtKB-KW"/>
</dbReference>
<dbReference type="FunFam" id="3.40.1210.10:FF:000001">
    <property type="entry name" value="5'/3'-nucleotidase SurE"/>
    <property type="match status" value="1"/>
</dbReference>
<dbReference type="Gene3D" id="3.40.1210.10">
    <property type="entry name" value="Survival protein SurE-like phosphatase/nucleotidase"/>
    <property type="match status" value="1"/>
</dbReference>
<dbReference type="HAMAP" id="MF_00060">
    <property type="entry name" value="SurE"/>
    <property type="match status" value="1"/>
</dbReference>
<dbReference type="InterPro" id="IPR030048">
    <property type="entry name" value="SurE"/>
</dbReference>
<dbReference type="InterPro" id="IPR002828">
    <property type="entry name" value="SurE-like_Pase/nucleotidase"/>
</dbReference>
<dbReference type="InterPro" id="IPR036523">
    <property type="entry name" value="SurE-like_sf"/>
</dbReference>
<dbReference type="NCBIfam" id="NF001489">
    <property type="entry name" value="PRK00346.1-3"/>
    <property type="match status" value="1"/>
</dbReference>
<dbReference type="NCBIfam" id="NF001490">
    <property type="entry name" value="PRK00346.1-4"/>
    <property type="match status" value="1"/>
</dbReference>
<dbReference type="NCBIfam" id="TIGR00087">
    <property type="entry name" value="surE"/>
    <property type="match status" value="1"/>
</dbReference>
<dbReference type="PANTHER" id="PTHR30457">
    <property type="entry name" value="5'-NUCLEOTIDASE SURE"/>
    <property type="match status" value="1"/>
</dbReference>
<dbReference type="PANTHER" id="PTHR30457:SF12">
    <property type="entry name" value="5'_3'-NUCLEOTIDASE SURE"/>
    <property type="match status" value="1"/>
</dbReference>
<dbReference type="Pfam" id="PF01975">
    <property type="entry name" value="SurE"/>
    <property type="match status" value="1"/>
</dbReference>
<dbReference type="SUPFAM" id="SSF64167">
    <property type="entry name" value="SurE-like"/>
    <property type="match status" value="1"/>
</dbReference>
<evidence type="ECO:0000255" key="1">
    <source>
        <dbReference type="HAMAP-Rule" id="MF_00060"/>
    </source>
</evidence>
<name>SURE_HAEI8</name>
<comment type="function">
    <text evidence="1">Nucleotidase that shows phosphatase activity on nucleoside 5'-monophosphates.</text>
</comment>
<comment type="catalytic activity">
    <reaction evidence="1">
        <text>a ribonucleoside 5'-phosphate + H2O = a ribonucleoside + phosphate</text>
        <dbReference type="Rhea" id="RHEA:12484"/>
        <dbReference type="ChEBI" id="CHEBI:15377"/>
        <dbReference type="ChEBI" id="CHEBI:18254"/>
        <dbReference type="ChEBI" id="CHEBI:43474"/>
        <dbReference type="ChEBI" id="CHEBI:58043"/>
        <dbReference type="EC" id="3.1.3.5"/>
    </reaction>
</comment>
<comment type="cofactor">
    <cofactor evidence="1">
        <name>a divalent metal cation</name>
        <dbReference type="ChEBI" id="CHEBI:60240"/>
    </cofactor>
    <text evidence="1">Binds 1 divalent metal cation per subunit.</text>
</comment>
<comment type="subcellular location">
    <subcellularLocation>
        <location evidence="1">Cytoplasm</location>
    </subcellularLocation>
</comment>
<comment type="similarity">
    <text evidence="1">Belongs to the SurE nucleotidase family.</text>
</comment>
<keyword id="KW-0963">Cytoplasm</keyword>
<keyword id="KW-0378">Hydrolase</keyword>
<keyword id="KW-0479">Metal-binding</keyword>
<keyword id="KW-0547">Nucleotide-binding</keyword>
<organism>
    <name type="scientific">Haemophilus influenzae (strain 86-028NP)</name>
    <dbReference type="NCBI Taxonomy" id="281310"/>
    <lineage>
        <taxon>Bacteria</taxon>
        <taxon>Pseudomonadati</taxon>
        <taxon>Pseudomonadota</taxon>
        <taxon>Gammaproteobacteria</taxon>
        <taxon>Pasteurellales</taxon>
        <taxon>Pasteurellaceae</taxon>
        <taxon>Haemophilus</taxon>
    </lineage>
</organism>